<accession>A8H1C7</accession>
<proteinExistence type="inferred from homology"/>
<protein>
    <recommendedName>
        <fullName evidence="1">Ribonuclease 3</fullName>
        <ecNumber evidence="1">3.1.26.3</ecNumber>
    </recommendedName>
    <alternativeName>
        <fullName evidence="1">Ribonuclease III</fullName>
        <shortName evidence="1">RNase III</shortName>
    </alternativeName>
</protein>
<feature type="chain" id="PRO_1000075815" description="Ribonuclease 3">
    <location>
        <begin position="1"/>
        <end position="225"/>
    </location>
</feature>
<feature type="domain" description="RNase III" evidence="1">
    <location>
        <begin position="7"/>
        <end position="129"/>
    </location>
</feature>
<feature type="domain" description="DRBM" evidence="1">
    <location>
        <begin position="155"/>
        <end position="225"/>
    </location>
</feature>
<feature type="active site" evidence="1">
    <location>
        <position position="46"/>
    </location>
</feature>
<feature type="active site" evidence="1">
    <location>
        <position position="118"/>
    </location>
</feature>
<feature type="binding site" evidence="1">
    <location>
        <position position="42"/>
    </location>
    <ligand>
        <name>Mg(2+)</name>
        <dbReference type="ChEBI" id="CHEBI:18420"/>
    </ligand>
</feature>
<feature type="binding site" evidence="1">
    <location>
        <position position="115"/>
    </location>
    <ligand>
        <name>Mg(2+)</name>
        <dbReference type="ChEBI" id="CHEBI:18420"/>
    </ligand>
</feature>
<feature type="binding site" evidence="1">
    <location>
        <position position="118"/>
    </location>
    <ligand>
        <name>Mg(2+)</name>
        <dbReference type="ChEBI" id="CHEBI:18420"/>
    </ligand>
</feature>
<name>RNC_SHEPA</name>
<sequence>MEPIKNIPRLCRTLGYEFNEKAFLDQALTHRSASNKHNERLEFLGDSILSIVISDALYHQFPAATEGDLSRMRATLVCGKMLAEIAIEFKLGDYLKLGPGELKSGGFRRESILADAVEAIIGAIYLDSDIENCRQLVLNWYESRLKVIEPINQKDPKTLLQEYLQKYRKPLPVYRVAHTEGDAHEQTFTVECIVEDLSQAVVGVASSRRKAEQSAAAQVLELIKK</sequence>
<comment type="function">
    <text evidence="1">Digests double-stranded RNA. Involved in the processing of primary rRNA transcript to yield the immediate precursors to the large and small rRNAs (23S and 16S). Processes some mRNAs, and tRNAs when they are encoded in the rRNA operon. Processes pre-crRNA and tracrRNA of type II CRISPR loci if present in the organism.</text>
</comment>
<comment type="catalytic activity">
    <reaction evidence="1">
        <text>Endonucleolytic cleavage to 5'-phosphomonoester.</text>
        <dbReference type="EC" id="3.1.26.3"/>
    </reaction>
</comment>
<comment type="cofactor">
    <cofactor evidence="1">
        <name>Mg(2+)</name>
        <dbReference type="ChEBI" id="CHEBI:18420"/>
    </cofactor>
</comment>
<comment type="subunit">
    <text evidence="1">Homodimer.</text>
</comment>
<comment type="subcellular location">
    <subcellularLocation>
        <location evidence="1">Cytoplasm</location>
    </subcellularLocation>
</comment>
<comment type="similarity">
    <text evidence="1">Belongs to the ribonuclease III family.</text>
</comment>
<gene>
    <name evidence="1" type="primary">rnc</name>
    <name type="ordered locus">Spea_1037</name>
</gene>
<organism>
    <name type="scientific">Shewanella pealeana (strain ATCC 700345 / ANG-SQ1)</name>
    <dbReference type="NCBI Taxonomy" id="398579"/>
    <lineage>
        <taxon>Bacteria</taxon>
        <taxon>Pseudomonadati</taxon>
        <taxon>Pseudomonadota</taxon>
        <taxon>Gammaproteobacteria</taxon>
        <taxon>Alteromonadales</taxon>
        <taxon>Shewanellaceae</taxon>
        <taxon>Shewanella</taxon>
    </lineage>
</organism>
<evidence type="ECO:0000255" key="1">
    <source>
        <dbReference type="HAMAP-Rule" id="MF_00104"/>
    </source>
</evidence>
<dbReference type="EC" id="3.1.26.3" evidence="1"/>
<dbReference type="EMBL" id="CP000851">
    <property type="protein sequence ID" value="ABV86364.1"/>
    <property type="molecule type" value="Genomic_DNA"/>
</dbReference>
<dbReference type="RefSeq" id="WP_012154295.1">
    <property type="nucleotide sequence ID" value="NC_009901.1"/>
</dbReference>
<dbReference type="SMR" id="A8H1C7"/>
<dbReference type="STRING" id="398579.Spea_1037"/>
<dbReference type="KEGG" id="spl:Spea_1037"/>
<dbReference type="eggNOG" id="COG0571">
    <property type="taxonomic scope" value="Bacteria"/>
</dbReference>
<dbReference type="HOGENOM" id="CLU_000907_1_1_6"/>
<dbReference type="OrthoDB" id="9805026at2"/>
<dbReference type="Proteomes" id="UP000002608">
    <property type="component" value="Chromosome"/>
</dbReference>
<dbReference type="GO" id="GO:0005737">
    <property type="term" value="C:cytoplasm"/>
    <property type="evidence" value="ECO:0007669"/>
    <property type="project" value="UniProtKB-SubCell"/>
</dbReference>
<dbReference type="GO" id="GO:0003725">
    <property type="term" value="F:double-stranded RNA binding"/>
    <property type="evidence" value="ECO:0007669"/>
    <property type="project" value="TreeGrafter"/>
</dbReference>
<dbReference type="GO" id="GO:0046872">
    <property type="term" value="F:metal ion binding"/>
    <property type="evidence" value="ECO:0007669"/>
    <property type="project" value="UniProtKB-KW"/>
</dbReference>
<dbReference type="GO" id="GO:0004525">
    <property type="term" value="F:ribonuclease III activity"/>
    <property type="evidence" value="ECO:0007669"/>
    <property type="project" value="UniProtKB-UniRule"/>
</dbReference>
<dbReference type="GO" id="GO:0019843">
    <property type="term" value="F:rRNA binding"/>
    <property type="evidence" value="ECO:0007669"/>
    <property type="project" value="UniProtKB-KW"/>
</dbReference>
<dbReference type="GO" id="GO:0006397">
    <property type="term" value="P:mRNA processing"/>
    <property type="evidence" value="ECO:0007669"/>
    <property type="project" value="UniProtKB-UniRule"/>
</dbReference>
<dbReference type="GO" id="GO:0010468">
    <property type="term" value="P:regulation of gene expression"/>
    <property type="evidence" value="ECO:0007669"/>
    <property type="project" value="TreeGrafter"/>
</dbReference>
<dbReference type="GO" id="GO:0006364">
    <property type="term" value="P:rRNA processing"/>
    <property type="evidence" value="ECO:0007669"/>
    <property type="project" value="UniProtKB-UniRule"/>
</dbReference>
<dbReference type="GO" id="GO:0008033">
    <property type="term" value="P:tRNA processing"/>
    <property type="evidence" value="ECO:0007669"/>
    <property type="project" value="UniProtKB-KW"/>
</dbReference>
<dbReference type="CDD" id="cd10845">
    <property type="entry name" value="DSRM_RNAse_III_family"/>
    <property type="match status" value="1"/>
</dbReference>
<dbReference type="CDD" id="cd00593">
    <property type="entry name" value="RIBOc"/>
    <property type="match status" value="1"/>
</dbReference>
<dbReference type="FunFam" id="1.10.1520.10:FF:000001">
    <property type="entry name" value="Ribonuclease 3"/>
    <property type="match status" value="1"/>
</dbReference>
<dbReference type="FunFam" id="3.30.160.20:FF:000003">
    <property type="entry name" value="Ribonuclease 3"/>
    <property type="match status" value="1"/>
</dbReference>
<dbReference type="Gene3D" id="3.30.160.20">
    <property type="match status" value="1"/>
</dbReference>
<dbReference type="Gene3D" id="1.10.1520.10">
    <property type="entry name" value="Ribonuclease III domain"/>
    <property type="match status" value="1"/>
</dbReference>
<dbReference type="HAMAP" id="MF_00104">
    <property type="entry name" value="RNase_III"/>
    <property type="match status" value="1"/>
</dbReference>
<dbReference type="InterPro" id="IPR014720">
    <property type="entry name" value="dsRBD_dom"/>
</dbReference>
<dbReference type="InterPro" id="IPR011907">
    <property type="entry name" value="RNase_III"/>
</dbReference>
<dbReference type="InterPro" id="IPR000999">
    <property type="entry name" value="RNase_III_dom"/>
</dbReference>
<dbReference type="InterPro" id="IPR036389">
    <property type="entry name" value="RNase_III_sf"/>
</dbReference>
<dbReference type="NCBIfam" id="TIGR02191">
    <property type="entry name" value="RNaseIII"/>
    <property type="match status" value="1"/>
</dbReference>
<dbReference type="PANTHER" id="PTHR11207:SF0">
    <property type="entry name" value="RIBONUCLEASE 3"/>
    <property type="match status" value="1"/>
</dbReference>
<dbReference type="PANTHER" id="PTHR11207">
    <property type="entry name" value="RIBONUCLEASE III"/>
    <property type="match status" value="1"/>
</dbReference>
<dbReference type="Pfam" id="PF00035">
    <property type="entry name" value="dsrm"/>
    <property type="match status" value="1"/>
</dbReference>
<dbReference type="Pfam" id="PF14622">
    <property type="entry name" value="Ribonucleas_3_3"/>
    <property type="match status" value="1"/>
</dbReference>
<dbReference type="SMART" id="SM00358">
    <property type="entry name" value="DSRM"/>
    <property type="match status" value="1"/>
</dbReference>
<dbReference type="SMART" id="SM00535">
    <property type="entry name" value="RIBOc"/>
    <property type="match status" value="1"/>
</dbReference>
<dbReference type="SUPFAM" id="SSF54768">
    <property type="entry name" value="dsRNA-binding domain-like"/>
    <property type="match status" value="1"/>
</dbReference>
<dbReference type="SUPFAM" id="SSF69065">
    <property type="entry name" value="RNase III domain-like"/>
    <property type="match status" value="1"/>
</dbReference>
<dbReference type="PROSITE" id="PS50137">
    <property type="entry name" value="DS_RBD"/>
    <property type="match status" value="1"/>
</dbReference>
<dbReference type="PROSITE" id="PS00517">
    <property type="entry name" value="RNASE_3_1"/>
    <property type="match status" value="1"/>
</dbReference>
<dbReference type="PROSITE" id="PS50142">
    <property type="entry name" value="RNASE_3_2"/>
    <property type="match status" value="1"/>
</dbReference>
<keyword id="KW-0963">Cytoplasm</keyword>
<keyword id="KW-0255">Endonuclease</keyword>
<keyword id="KW-0378">Hydrolase</keyword>
<keyword id="KW-0460">Magnesium</keyword>
<keyword id="KW-0479">Metal-binding</keyword>
<keyword id="KW-0507">mRNA processing</keyword>
<keyword id="KW-0540">Nuclease</keyword>
<keyword id="KW-1185">Reference proteome</keyword>
<keyword id="KW-0694">RNA-binding</keyword>
<keyword id="KW-0698">rRNA processing</keyword>
<keyword id="KW-0699">rRNA-binding</keyword>
<keyword id="KW-0819">tRNA processing</keyword>
<reference key="1">
    <citation type="submission" date="2007-10" db="EMBL/GenBank/DDBJ databases">
        <title>Complete sequence of Shewanella pealeana ATCC 700345.</title>
        <authorList>
            <consortium name="US DOE Joint Genome Institute"/>
            <person name="Copeland A."/>
            <person name="Lucas S."/>
            <person name="Lapidus A."/>
            <person name="Barry K."/>
            <person name="Glavina del Rio T."/>
            <person name="Dalin E."/>
            <person name="Tice H."/>
            <person name="Pitluck S."/>
            <person name="Chertkov O."/>
            <person name="Brettin T."/>
            <person name="Bruce D."/>
            <person name="Detter J.C."/>
            <person name="Han C."/>
            <person name="Schmutz J."/>
            <person name="Larimer F."/>
            <person name="Land M."/>
            <person name="Hauser L."/>
            <person name="Kyrpides N."/>
            <person name="Kim E."/>
            <person name="Zhao J.-S.Z."/>
            <person name="Manno D."/>
            <person name="Hawari J."/>
            <person name="Richardson P."/>
        </authorList>
    </citation>
    <scope>NUCLEOTIDE SEQUENCE [LARGE SCALE GENOMIC DNA]</scope>
    <source>
        <strain>ATCC 700345 / ANG-SQ1</strain>
    </source>
</reference>